<accession>Q6F0E4</accession>
<gene>
    <name evidence="1" type="primary">tilS</name>
    <name type="ordered locus">Mfl673</name>
</gene>
<proteinExistence type="inferred from homology"/>
<evidence type="ECO:0000255" key="1">
    <source>
        <dbReference type="HAMAP-Rule" id="MF_01161"/>
    </source>
</evidence>
<reference key="1">
    <citation type="submission" date="2004-06" db="EMBL/GenBank/DDBJ databases">
        <authorList>
            <person name="Birren B.W."/>
            <person name="Stange-Thomann N."/>
            <person name="Hafez N."/>
            <person name="DeCaprio D."/>
            <person name="Fisher S."/>
            <person name="Butler J."/>
            <person name="Elkins T."/>
            <person name="Kodira C.D."/>
            <person name="Major J."/>
            <person name="Wang S."/>
            <person name="Nicol R."/>
            <person name="Nusbaum C."/>
        </authorList>
    </citation>
    <scope>NUCLEOTIDE SEQUENCE [LARGE SCALE GENOMIC DNA]</scope>
    <source>
        <strain>ATCC 33453 / NBRC 100688 / NCTC 11704 / L1</strain>
    </source>
</reference>
<protein>
    <recommendedName>
        <fullName evidence="1">tRNA(Ile)-lysidine synthase</fullName>
        <ecNumber evidence="1">6.3.4.19</ecNumber>
    </recommendedName>
    <alternativeName>
        <fullName evidence="1">tRNA(Ile)-2-lysyl-cytidine synthase</fullName>
    </alternativeName>
    <alternativeName>
        <fullName evidence="1">tRNA(Ile)-lysidine synthetase</fullName>
    </alternativeName>
</protein>
<name>TILS_MESFL</name>
<dbReference type="EC" id="6.3.4.19" evidence="1"/>
<dbReference type="EMBL" id="AE017263">
    <property type="protein sequence ID" value="AAT76029.1"/>
    <property type="molecule type" value="Genomic_DNA"/>
</dbReference>
<dbReference type="RefSeq" id="WP_011183569.1">
    <property type="nucleotide sequence ID" value="NC_006055.1"/>
</dbReference>
<dbReference type="RefSeq" id="YP_053913.1">
    <property type="nucleotide sequence ID" value="NC_006055.1"/>
</dbReference>
<dbReference type="SMR" id="Q6F0E4"/>
<dbReference type="STRING" id="265311.Mfl673"/>
<dbReference type="PaxDb" id="265311-Mfl673"/>
<dbReference type="EnsemblBacteria" id="AAT76029">
    <property type="protein sequence ID" value="AAT76029"/>
    <property type="gene ID" value="Mfl673"/>
</dbReference>
<dbReference type="GeneID" id="2898039"/>
<dbReference type="KEGG" id="mfl:Mfl673"/>
<dbReference type="PATRIC" id="fig|265311.5.peg.675"/>
<dbReference type="eggNOG" id="COG0037">
    <property type="taxonomic scope" value="Bacteria"/>
</dbReference>
<dbReference type="HOGENOM" id="CLU_018869_0_2_14"/>
<dbReference type="OrthoDB" id="9807403at2"/>
<dbReference type="Proteomes" id="UP000006647">
    <property type="component" value="Chromosome"/>
</dbReference>
<dbReference type="GO" id="GO:0005737">
    <property type="term" value="C:cytoplasm"/>
    <property type="evidence" value="ECO:0007669"/>
    <property type="project" value="UniProtKB-SubCell"/>
</dbReference>
<dbReference type="GO" id="GO:0005524">
    <property type="term" value="F:ATP binding"/>
    <property type="evidence" value="ECO:0007669"/>
    <property type="project" value="UniProtKB-UniRule"/>
</dbReference>
<dbReference type="GO" id="GO:0032267">
    <property type="term" value="F:tRNA(Ile)-lysidine synthase activity"/>
    <property type="evidence" value="ECO:0007669"/>
    <property type="project" value="UniProtKB-EC"/>
</dbReference>
<dbReference type="GO" id="GO:0006400">
    <property type="term" value="P:tRNA modification"/>
    <property type="evidence" value="ECO:0007669"/>
    <property type="project" value="UniProtKB-UniRule"/>
</dbReference>
<dbReference type="CDD" id="cd01992">
    <property type="entry name" value="TilS_N"/>
    <property type="match status" value="1"/>
</dbReference>
<dbReference type="Gene3D" id="3.40.50.620">
    <property type="entry name" value="HUPs"/>
    <property type="match status" value="1"/>
</dbReference>
<dbReference type="HAMAP" id="MF_01161">
    <property type="entry name" value="tRNA_Ile_lys_synt"/>
    <property type="match status" value="1"/>
</dbReference>
<dbReference type="InterPro" id="IPR014729">
    <property type="entry name" value="Rossmann-like_a/b/a_fold"/>
</dbReference>
<dbReference type="InterPro" id="IPR011063">
    <property type="entry name" value="TilS/TtcA_N"/>
</dbReference>
<dbReference type="InterPro" id="IPR012094">
    <property type="entry name" value="tRNA_Ile_lys_synt"/>
</dbReference>
<dbReference type="InterPro" id="IPR012795">
    <property type="entry name" value="tRNA_Ile_lys_synt_N"/>
</dbReference>
<dbReference type="NCBIfam" id="TIGR02432">
    <property type="entry name" value="lysidine_TilS_N"/>
    <property type="match status" value="1"/>
</dbReference>
<dbReference type="PANTHER" id="PTHR43033">
    <property type="entry name" value="TRNA(ILE)-LYSIDINE SYNTHASE-RELATED"/>
    <property type="match status" value="1"/>
</dbReference>
<dbReference type="PANTHER" id="PTHR43033:SF1">
    <property type="entry name" value="TRNA(ILE)-LYSIDINE SYNTHASE-RELATED"/>
    <property type="match status" value="1"/>
</dbReference>
<dbReference type="Pfam" id="PF01171">
    <property type="entry name" value="ATP_bind_3"/>
    <property type="match status" value="1"/>
</dbReference>
<dbReference type="SUPFAM" id="SSF52402">
    <property type="entry name" value="Adenine nucleotide alpha hydrolases-like"/>
    <property type="match status" value="1"/>
</dbReference>
<feature type="chain" id="PRO_0000181720" description="tRNA(Ile)-lysidine synthase">
    <location>
        <begin position="1"/>
        <end position="398"/>
    </location>
</feature>
<feature type="binding site" evidence="1">
    <location>
        <begin position="17"/>
        <end position="22"/>
    </location>
    <ligand>
        <name>ATP</name>
        <dbReference type="ChEBI" id="CHEBI:30616"/>
    </ligand>
</feature>
<comment type="function">
    <text evidence="1">Ligates lysine onto the cytidine present at position 34 of the AUA codon-specific tRNA(Ile) that contains the anticodon CAU, in an ATP-dependent manner. Cytidine is converted to lysidine, thus changing the amino acid specificity of the tRNA from methionine to isoleucine.</text>
</comment>
<comment type="catalytic activity">
    <reaction evidence="1">
        <text>cytidine(34) in tRNA(Ile2) + L-lysine + ATP = lysidine(34) in tRNA(Ile2) + AMP + diphosphate + H(+)</text>
        <dbReference type="Rhea" id="RHEA:43744"/>
        <dbReference type="Rhea" id="RHEA-COMP:10625"/>
        <dbReference type="Rhea" id="RHEA-COMP:10670"/>
        <dbReference type="ChEBI" id="CHEBI:15378"/>
        <dbReference type="ChEBI" id="CHEBI:30616"/>
        <dbReference type="ChEBI" id="CHEBI:32551"/>
        <dbReference type="ChEBI" id="CHEBI:33019"/>
        <dbReference type="ChEBI" id="CHEBI:82748"/>
        <dbReference type="ChEBI" id="CHEBI:83665"/>
        <dbReference type="ChEBI" id="CHEBI:456215"/>
        <dbReference type="EC" id="6.3.4.19"/>
    </reaction>
</comment>
<comment type="subcellular location">
    <subcellularLocation>
        <location evidence="1">Cytoplasm</location>
    </subcellularLocation>
</comment>
<comment type="domain">
    <text>The N-terminal region contains the highly conserved SGGXDS motif, predicted to be a P-loop motif involved in ATP binding.</text>
</comment>
<comment type="similarity">
    <text evidence="1">Belongs to the tRNA(Ile)-lysidine synthase family.</text>
</comment>
<keyword id="KW-0067">ATP-binding</keyword>
<keyword id="KW-0963">Cytoplasm</keyword>
<keyword id="KW-0436">Ligase</keyword>
<keyword id="KW-0547">Nucleotide-binding</keyword>
<keyword id="KW-1185">Reference proteome</keyword>
<keyword id="KW-0819">tRNA processing</keyword>
<sequence>MERFKLNTTLSYLVAVSGGPDSMFMLNELIKMNIKEIVVCHVNYNFREDSWKDQKLVEDFCLKNNLKLEKLIINQDYSKLKENFESWARNIRYDFFVEISKKYNIQNVLIAHNRNDLVETFLLQQDRKGYVKHYGLNKTSTYKEITIVRPMLNILKSEILKSLKEENIAFVIDSTNEDKKYKRNKIRANLSESTFNDFEETIKKLNKKLEIINLEVNWYVNNNMSADELKINKNLQDQDLEFIQRTIYKWLEVIKKDFVIQNRRNKTIFEIAKNIKVSEKVFWEINIGEYSIIKDYENLFIIETKAIQPKTILIKSKEDLYLSEEFINWLDLLNAIKRNKENYPYVITNDFLTYKLNTYTFGKKTNRYLIDKKIRYKNRMLKAVVYSTKTKKILNTIK</sequence>
<organism>
    <name type="scientific">Mesoplasma florum (strain ATCC 33453 / NBRC 100688 / NCTC 11704 / L1)</name>
    <name type="common">Acholeplasma florum</name>
    <dbReference type="NCBI Taxonomy" id="265311"/>
    <lineage>
        <taxon>Bacteria</taxon>
        <taxon>Bacillati</taxon>
        <taxon>Mycoplasmatota</taxon>
        <taxon>Mollicutes</taxon>
        <taxon>Entomoplasmatales</taxon>
        <taxon>Entomoplasmataceae</taxon>
        <taxon>Mesoplasma</taxon>
    </lineage>
</organism>